<dbReference type="EMBL" id="L39832">
    <property type="protein sequence ID" value="AAA79754.1"/>
    <property type="molecule type" value="Genomic_DNA"/>
</dbReference>
<dbReference type="EMBL" id="AE004091">
    <property type="protein sequence ID" value="AAG04833.1"/>
    <property type="molecule type" value="Genomic_DNA"/>
</dbReference>
<dbReference type="PIR" id="F83464">
    <property type="entry name" value="F83464"/>
</dbReference>
<dbReference type="RefSeq" id="NP_250135.1">
    <property type="nucleotide sequence ID" value="NC_002516.2"/>
</dbReference>
<dbReference type="RefSeq" id="WP_003083049.1">
    <property type="nucleotide sequence ID" value="NZ_QZGE01000005.1"/>
</dbReference>
<dbReference type="SMR" id="Q51466"/>
<dbReference type="FunCoup" id="Q51466">
    <property type="interactions" value="48"/>
</dbReference>
<dbReference type="STRING" id="208964.PA1444"/>
<dbReference type="PaxDb" id="208964-PA1444"/>
<dbReference type="DNASU" id="881851"/>
<dbReference type="GeneID" id="881851"/>
<dbReference type="KEGG" id="pae:PA1444"/>
<dbReference type="PATRIC" id="fig|208964.12.peg.1495"/>
<dbReference type="PseudoCAP" id="PA1444"/>
<dbReference type="HOGENOM" id="CLU_097058_1_1_6"/>
<dbReference type="InParanoid" id="Q51466"/>
<dbReference type="OrthoDB" id="9773459at2"/>
<dbReference type="PhylomeDB" id="Q51466"/>
<dbReference type="BioCyc" id="PAER208964:G1FZ6-1470-MONOMER"/>
<dbReference type="Proteomes" id="UP000002438">
    <property type="component" value="Chromosome"/>
</dbReference>
<dbReference type="GO" id="GO:0009425">
    <property type="term" value="C:bacterial-type flagellum basal body"/>
    <property type="evidence" value="ECO:0007669"/>
    <property type="project" value="UniProtKB-SubCell"/>
</dbReference>
<dbReference type="GO" id="GO:0005886">
    <property type="term" value="C:plasma membrane"/>
    <property type="evidence" value="ECO:0007669"/>
    <property type="project" value="UniProtKB-SubCell"/>
</dbReference>
<dbReference type="GO" id="GO:0003774">
    <property type="term" value="F:cytoskeletal motor activity"/>
    <property type="evidence" value="ECO:0007669"/>
    <property type="project" value="InterPro"/>
</dbReference>
<dbReference type="GO" id="GO:0071973">
    <property type="term" value="P:bacterial-type flagellum-dependent cell motility"/>
    <property type="evidence" value="ECO:0007669"/>
    <property type="project" value="InterPro"/>
</dbReference>
<dbReference type="GO" id="GO:0006935">
    <property type="term" value="P:chemotaxis"/>
    <property type="evidence" value="ECO:0007669"/>
    <property type="project" value="UniProtKB-KW"/>
</dbReference>
<dbReference type="FunFam" id="2.30.330.10:FF:000001">
    <property type="entry name" value="Flagellar motor switch protein FliN"/>
    <property type="match status" value="1"/>
</dbReference>
<dbReference type="Gene3D" id="2.30.330.10">
    <property type="entry name" value="SpoA-like"/>
    <property type="match status" value="1"/>
</dbReference>
<dbReference type="InterPro" id="IPR012826">
    <property type="entry name" value="FliN"/>
</dbReference>
<dbReference type="InterPro" id="IPR001543">
    <property type="entry name" value="FliN-like_C"/>
</dbReference>
<dbReference type="InterPro" id="IPR051469">
    <property type="entry name" value="FliN/MopA/SpaO"/>
</dbReference>
<dbReference type="InterPro" id="IPR001172">
    <property type="entry name" value="FliN_T3SS_HrcQb"/>
</dbReference>
<dbReference type="InterPro" id="IPR036429">
    <property type="entry name" value="SpoA-like_sf"/>
</dbReference>
<dbReference type="NCBIfam" id="TIGR02480">
    <property type="entry name" value="fliN"/>
    <property type="match status" value="1"/>
</dbReference>
<dbReference type="PANTHER" id="PTHR43484">
    <property type="match status" value="1"/>
</dbReference>
<dbReference type="PANTHER" id="PTHR43484:SF1">
    <property type="entry name" value="FLAGELLAR MOTOR SWITCH PROTEIN FLIN"/>
    <property type="match status" value="1"/>
</dbReference>
<dbReference type="Pfam" id="PF01052">
    <property type="entry name" value="FliMN_C"/>
    <property type="match status" value="1"/>
</dbReference>
<dbReference type="PRINTS" id="PR00956">
    <property type="entry name" value="FLGMOTORFLIN"/>
</dbReference>
<dbReference type="SUPFAM" id="SSF101801">
    <property type="entry name" value="Surface presentation of antigens (SPOA)"/>
    <property type="match status" value="1"/>
</dbReference>
<evidence type="ECO:0000250" key="1"/>
<evidence type="ECO:0000256" key="2">
    <source>
        <dbReference type="SAM" id="MobiDB-lite"/>
    </source>
</evidence>
<evidence type="ECO:0000305" key="3"/>
<proteinExistence type="inferred from homology"/>
<name>FLIN_PSEAE</name>
<feature type="chain" id="PRO_0000184121" description="Flagellar motor switch protein FliN">
    <location>
        <begin position="1"/>
        <end position="157"/>
    </location>
</feature>
<feature type="region of interest" description="Disordered" evidence="2">
    <location>
        <begin position="24"/>
        <end position="67"/>
    </location>
</feature>
<feature type="sequence conflict" description="In Ref. 1; AAA79754." evidence="3" ref="1">
    <original>P</original>
    <variation>S</variation>
    <location>
        <position position="48"/>
    </location>
</feature>
<comment type="function">
    <text evidence="1">FliN is one of three proteins (FliG, FliN, FliM) that form the rotor-mounted switch complex (C ring), located at the base of the basal body. This complex interacts with the CheY and CheZ chemotaxis proteins, in addition to contacting components of the motor that determine the direction of flagellar rotation (By similarity).</text>
</comment>
<comment type="subcellular location">
    <subcellularLocation>
        <location evidence="3">Cell inner membrane</location>
        <topology evidence="3">Peripheral membrane protein</topology>
        <orientation evidence="3">Cytoplasmic side</orientation>
    </subcellularLocation>
    <subcellularLocation>
        <location evidence="3">Bacterial flagellum basal body</location>
    </subcellularLocation>
</comment>
<comment type="similarity">
    <text evidence="3">Belongs to the FliN/MopA/SpaO family.</text>
</comment>
<sequence length="157" mass="16620">MADEEKVTTEEQALADEWAAALAEAGDASQDDIDALMAQGGATPVAEPSTPRAPMEEFGASPKAPTISGLEGPNLDVILDIPVTISMEVGHTDISIRNLLQLNQGSVIELDRLAGEPLDVLVNGTLIAHGEVVVVNEKFGIRLTDVISPSERIKKLR</sequence>
<gene>
    <name type="primary">fliN</name>
    <name type="ordered locus">PA1444</name>
</gene>
<accession>Q51466</accession>
<reference key="1">
    <citation type="journal article" date="1995" name="Infect. Immun.">
        <title>Characterization of Pseudomonas aeruginosa fliO, a gene involved in flagellar biosynthesis and adherence.</title>
        <authorList>
            <person name="Simpson D.A."/>
            <person name="Ramphal R."/>
            <person name="Lory S."/>
        </authorList>
    </citation>
    <scope>NUCLEOTIDE SEQUENCE [GENOMIC DNA]</scope>
    <source>
        <strain>PAK</strain>
    </source>
</reference>
<reference key="2">
    <citation type="journal article" date="2000" name="Nature">
        <title>Complete genome sequence of Pseudomonas aeruginosa PAO1, an opportunistic pathogen.</title>
        <authorList>
            <person name="Stover C.K."/>
            <person name="Pham X.-Q.T."/>
            <person name="Erwin A.L."/>
            <person name="Mizoguchi S.D."/>
            <person name="Warrener P."/>
            <person name="Hickey M.J."/>
            <person name="Brinkman F.S.L."/>
            <person name="Hufnagle W.O."/>
            <person name="Kowalik D.J."/>
            <person name="Lagrou M."/>
            <person name="Garber R.L."/>
            <person name="Goltry L."/>
            <person name="Tolentino E."/>
            <person name="Westbrock-Wadman S."/>
            <person name="Yuan Y."/>
            <person name="Brody L.L."/>
            <person name="Coulter S.N."/>
            <person name="Folger K.R."/>
            <person name="Kas A."/>
            <person name="Larbig K."/>
            <person name="Lim R.M."/>
            <person name="Smith K.A."/>
            <person name="Spencer D.H."/>
            <person name="Wong G.K.-S."/>
            <person name="Wu Z."/>
            <person name="Paulsen I.T."/>
            <person name="Reizer J."/>
            <person name="Saier M.H. Jr."/>
            <person name="Hancock R.E.W."/>
            <person name="Lory S."/>
            <person name="Olson M.V."/>
        </authorList>
    </citation>
    <scope>NUCLEOTIDE SEQUENCE [LARGE SCALE GENOMIC DNA]</scope>
    <source>
        <strain>ATCC 15692 / DSM 22644 / CIP 104116 / JCM 14847 / LMG 12228 / 1C / PRS 101 / PAO1</strain>
    </source>
</reference>
<organism>
    <name type="scientific">Pseudomonas aeruginosa (strain ATCC 15692 / DSM 22644 / CIP 104116 / JCM 14847 / LMG 12228 / 1C / PRS 101 / PAO1)</name>
    <dbReference type="NCBI Taxonomy" id="208964"/>
    <lineage>
        <taxon>Bacteria</taxon>
        <taxon>Pseudomonadati</taxon>
        <taxon>Pseudomonadota</taxon>
        <taxon>Gammaproteobacteria</taxon>
        <taxon>Pseudomonadales</taxon>
        <taxon>Pseudomonadaceae</taxon>
        <taxon>Pseudomonas</taxon>
    </lineage>
</organism>
<keyword id="KW-0975">Bacterial flagellum</keyword>
<keyword id="KW-0997">Cell inner membrane</keyword>
<keyword id="KW-1003">Cell membrane</keyword>
<keyword id="KW-0145">Chemotaxis</keyword>
<keyword id="KW-0283">Flagellar rotation</keyword>
<keyword id="KW-0472">Membrane</keyword>
<keyword id="KW-1185">Reference proteome</keyword>
<protein>
    <recommendedName>
        <fullName>Flagellar motor switch protein FliN</fullName>
    </recommendedName>
</protein>